<dbReference type="EC" id="6.1.1.15" evidence="1"/>
<dbReference type="EMBL" id="BX548175">
    <property type="protein sequence ID" value="CAE21434.1"/>
    <property type="molecule type" value="Genomic_DNA"/>
</dbReference>
<dbReference type="RefSeq" id="WP_011130628.1">
    <property type="nucleotide sequence ID" value="NC_005071.1"/>
</dbReference>
<dbReference type="SMR" id="Q7TUU4"/>
<dbReference type="KEGG" id="pmt:PMT_1259"/>
<dbReference type="eggNOG" id="COG0442">
    <property type="taxonomic scope" value="Bacteria"/>
</dbReference>
<dbReference type="HOGENOM" id="CLU_016739_0_0_3"/>
<dbReference type="OrthoDB" id="9809052at2"/>
<dbReference type="Proteomes" id="UP000001423">
    <property type="component" value="Chromosome"/>
</dbReference>
<dbReference type="GO" id="GO:0005829">
    <property type="term" value="C:cytosol"/>
    <property type="evidence" value="ECO:0007669"/>
    <property type="project" value="TreeGrafter"/>
</dbReference>
<dbReference type="GO" id="GO:0002161">
    <property type="term" value="F:aminoacyl-tRNA deacylase activity"/>
    <property type="evidence" value="ECO:0007669"/>
    <property type="project" value="InterPro"/>
</dbReference>
<dbReference type="GO" id="GO:0005524">
    <property type="term" value="F:ATP binding"/>
    <property type="evidence" value="ECO:0007669"/>
    <property type="project" value="UniProtKB-UniRule"/>
</dbReference>
<dbReference type="GO" id="GO:0004827">
    <property type="term" value="F:proline-tRNA ligase activity"/>
    <property type="evidence" value="ECO:0007669"/>
    <property type="project" value="UniProtKB-UniRule"/>
</dbReference>
<dbReference type="GO" id="GO:0006433">
    <property type="term" value="P:prolyl-tRNA aminoacylation"/>
    <property type="evidence" value="ECO:0007669"/>
    <property type="project" value="UniProtKB-UniRule"/>
</dbReference>
<dbReference type="CDD" id="cd04334">
    <property type="entry name" value="ProRS-INS"/>
    <property type="match status" value="1"/>
</dbReference>
<dbReference type="CDD" id="cd00861">
    <property type="entry name" value="ProRS_anticodon_short"/>
    <property type="match status" value="1"/>
</dbReference>
<dbReference type="CDD" id="cd00779">
    <property type="entry name" value="ProRS_core_prok"/>
    <property type="match status" value="1"/>
</dbReference>
<dbReference type="Gene3D" id="3.40.50.800">
    <property type="entry name" value="Anticodon-binding domain"/>
    <property type="match status" value="1"/>
</dbReference>
<dbReference type="Gene3D" id="3.30.930.10">
    <property type="entry name" value="Bira Bifunctional Protein, Domain 2"/>
    <property type="match status" value="2"/>
</dbReference>
<dbReference type="HAMAP" id="MF_01569">
    <property type="entry name" value="Pro_tRNA_synth_type1"/>
    <property type="match status" value="1"/>
</dbReference>
<dbReference type="InterPro" id="IPR002314">
    <property type="entry name" value="aa-tRNA-synt_IIb"/>
</dbReference>
<dbReference type="InterPro" id="IPR006195">
    <property type="entry name" value="aa-tRNA-synth_II"/>
</dbReference>
<dbReference type="InterPro" id="IPR045864">
    <property type="entry name" value="aa-tRNA-synth_II/BPL/LPL"/>
</dbReference>
<dbReference type="InterPro" id="IPR004154">
    <property type="entry name" value="Anticodon-bd"/>
</dbReference>
<dbReference type="InterPro" id="IPR036621">
    <property type="entry name" value="Anticodon-bd_dom_sf"/>
</dbReference>
<dbReference type="InterPro" id="IPR002316">
    <property type="entry name" value="Pro-tRNA-ligase_IIa"/>
</dbReference>
<dbReference type="InterPro" id="IPR004500">
    <property type="entry name" value="Pro-tRNA-synth_IIa_bac-type"/>
</dbReference>
<dbReference type="InterPro" id="IPR023717">
    <property type="entry name" value="Pro-tRNA-Synthase_IIa_type1"/>
</dbReference>
<dbReference type="InterPro" id="IPR050062">
    <property type="entry name" value="Pro-tRNA_synthetase"/>
</dbReference>
<dbReference type="InterPro" id="IPR044140">
    <property type="entry name" value="ProRS_anticodon_short"/>
</dbReference>
<dbReference type="InterPro" id="IPR033730">
    <property type="entry name" value="ProRS_core_prok"/>
</dbReference>
<dbReference type="InterPro" id="IPR036754">
    <property type="entry name" value="YbaK/aa-tRNA-synt-asso_dom_sf"/>
</dbReference>
<dbReference type="InterPro" id="IPR007214">
    <property type="entry name" value="YbaK/aa-tRNA-synth-assoc-dom"/>
</dbReference>
<dbReference type="NCBIfam" id="NF006625">
    <property type="entry name" value="PRK09194.1"/>
    <property type="match status" value="1"/>
</dbReference>
<dbReference type="NCBIfam" id="TIGR00409">
    <property type="entry name" value="proS_fam_II"/>
    <property type="match status" value="1"/>
</dbReference>
<dbReference type="PANTHER" id="PTHR42753">
    <property type="entry name" value="MITOCHONDRIAL RIBOSOME PROTEIN L39/PROLYL-TRNA LIGASE FAMILY MEMBER"/>
    <property type="match status" value="1"/>
</dbReference>
<dbReference type="PANTHER" id="PTHR42753:SF2">
    <property type="entry name" value="PROLINE--TRNA LIGASE"/>
    <property type="match status" value="1"/>
</dbReference>
<dbReference type="Pfam" id="PF03129">
    <property type="entry name" value="HGTP_anticodon"/>
    <property type="match status" value="1"/>
</dbReference>
<dbReference type="Pfam" id="PF00587">
    <property type="entry name" value="tRNA-synt_2b"/>
    <property type="match status" value="1"/>
</dbReference>
<dbReference type="Pfam" id="PF04073">
    <property type="entry name" value="tRNA_edit"/>
    <property type="match status" value="1"/>
</dbReference>
<dbReference type="PRINTS" id="PR01046">
    <property type="entry name" value="TRNASYNTHPRO"/>
</dbReference>
<dbReference type="SUPFAM" id="SSF52954">
    <property type="entry name" value="Class II aaRS ABD-related"/>
    <property type="match status" value="1"/>
</dbReference>
<dbReference type="SUPFAM" id="SSF55681">
    <property type="entry name" value="Class II aaRS and biotin synthetases"/>
    <property type="match status" value="1"/>
</dbReference>
<dbReference type="SUPFAM" id="SSF55826">
    <property type="entry name" value="YbaK/ProRS associated domain"/>
    <property type="match status" value="1"/>
</dbReference>
<dbReference type="PROSITE" id="PS50862">
    <property type="entry name" value="AA_TRNA_LIGASE_II"/>
    <property type="match status" value="1"/>
</dbReference>
<proteinExistence type="inferred from homology"/>
<gene>
    <name evidence="1" type="primary">proS</name>
    <name type="ordered locus">PMT_1259</name>
</gene>
<comment type="function">
    <text evidence="1">Catalyzes the attachment of proline to tRNA(Pro) in a two-step reaction: proline is first activated by ATP to form Pro-AMP and then transferred to the acceptor end of tRNA(Pro). As ProRS can inadvertently accommodate and process non-cognate amino acids such as alanine and cysteine, to avoid such errors it has two additional distinct editing activities against alanine. One activity is designated as 'pretransfer' editing and involves the tRNA(Pro)-independent hydrolysis of activated Ala-AMP. The other activity is designated 'posttransfer' editing and involves deacylation of mischarged Ala-tRNA(Pro). The misacylated Cys-tRNA(Pro) is not edited by ProRS.</text>
</comment>
<comment type="catalytic activity">
    <reaction evidence="1">
        <text>tRNA(Pro) + L-proline + ATP = L-prolyl-tRNA(Pro) + AMP + diphosphate</text>
        <dbReference type="Rhea" id="RHEA:14305"/>
        <dbReference type="Rhea" id="RHEA-COMP:9700"/>
        <dbReference type="Rhea" id="RHEA-COMP:9702"/>
        <dbReference type="ChEBI" id="CHEBI:30616"/>
        <dbReference type="ChEBI" id="CHEBI:33019"/>
        <dbReference type="ChEBI" id="CHEBI:60039"/>
        <dbReference type="ChEBI" id="CHEBI:78442"/>
        <dbReference type="ChEBI" id="CHEBI:78532"/>
        <dbReference type="ChEBI" id="CHEBI:456215"/>
        <dbReference type="EC" id="6.1.1.15"/>
    </reaction>
</comment>
<comment type="subunit">
    <text evidence="1">Homodimer.</text>
</comment>
<comment type="subcellular location">
    <subcellularLocation>
        <location evidence="1">Cytoplasm</location>
    </subcellularLocation>
</comment>
<comment type="domain">
    <text evidence="1">Consists of three domains: the N-terminal catalytic domain, the editing domain and the C-terminal anticodon-binding domain.</text>
</comment>
<comment type="similarity">
    <text evidence="1">Belongs to the class-II aminoacyl-tRNA synthetase family. ProS type 1 subfamily.</text>
</comment>
<name>SYP_PROMM</name>
<organism>
    <name type="scientific">Prochlorococcus marinus (strain MIT 9313)</name>
    <dbReference type="NCBI Taxonomy" id="74547"/>
    <lineage>
        <taxon>Bacteria</taxon>
        <taxon>Bacillati</taxon>
        <taxon>Cyanobacteriota</taxon>
        <taxon>Cyanophyceae</taxon>
        <taxon>Synechococcales</taxon>
        <taxon>Prochlorococcaceae</taxon>
        <taxon>Prochlorococcus</taxon>
    </lineage>
</organism>
<keyword id="KW-0030">Aminoacyl-tRNA synthetase</keyword>
<keyword id="KW-0067">ATP-binding</keyword>
<keyword id="KW-0963">Cytoplasm</keyword>
<keyword id="KW-0436">Ligase</keyword>
<keyword id="KW-0547">Nucleotide-binding</keyword>
<keyword id="KW-0648">Protein biosynthesis</keyword>
<keyword id="KW-1185">Reference proteome</keyword>
<sequence>MRVSRLMLVTLRDIPADAEIASHQLLLRGGYIRRVTSGIYAYLPLMWRVLRKITSIVQEEMDATGALETLLPQLQPAELWRRSGRWQGYTAGEGLMFHLEDRQGRELGLGPTHEEVITSLAGDLLRSYRQLPVTLYQIQSKFRDEIRPRFGLMRGREFIMKDAYSFHSCEADLAMTYRAMDEAYQRIFSRCGLETVAVEADSGAIGGASSQEFMVTADAGEDLILISGDGHYAANQEKAVSHPPKAIPLPASKVALLDTPEQGTIETLCTAQGLVPSQVVKVLVMLARFEDGELQPVLVSIRGDQQLNEVKLINALSRELNKGVLDVAPISADQITAQKLEAWPFGAIGPDLDDALLSGATSWTKHFLRLADPTATELNCFVCGANQNNQHRTGMTWSKLGGVPKSVDLRKSQAGDRCIHDSSQILEERRGIEVGHIFQLGRKYSEALEACFTNDQGTQEPFWMGCYGIGISRLAQAAVEQHHDEAGMKWPLAIAPFEVIIVVANIQDEVQQKLAEQLYSELQAADIEALLDDRTERAGVKFKDADLIGIPWRVVVGRDAAKGQVELIQRSSRKVQILSAKQAFTALVKDIAANQNTRV</sequence>
<accession>Q7TUU4</accession>
<protein>
    <recommendedName>
        <fullName evidence="1">Proline--tRNA ligase</fullName>
        <ecNumber evidence="1">6.1.1.15</ecNumber>
    </recommendedName>
    <alternativeName>
        <fullName evidence="1">Prolyl-tRNA synthetase</fullName>
        <shortName evidence="1">ProRS</shortName>
    </alternativeName>
</protein>
<evidence type="ECO:0000255" key="1">
    <source>
        <dbReference type="HAMAP-Rule" id="MF_01569"/>
    </source>
</evidence>
<reference key="1">
    <citation type="journal article" date="2003" name="Nature">
        <title>Genome divergence in two Prochlorococcus ecotypes reflects oceanic niche differentiation.</title>
        <authorList>
            <person name="Rocap G."/>
            <person name="Larimer F.W."/>
            <person name="Lamerdin J.E."/>
            <person name="Malfatti S."/>
            <person name="Chain P."/>
            <person name="Ahlgren N.A."/>
            <person name="Arellano A."/>
            <person name="Coleman M."/>
            <person name="Hauser L."/>
            <person name="Hess W.R."/>
            <person name="Johnson Z.I."/>
            <person name="Land M.L."/>
            <person name="Lindell D."/>
            <person name="Post A.F."/>
            <person name="Regala W."/>
            <person name="Shah M."/>
            <person name="Shaw S.L."/>
            <person name="Steglich C."/>
            <person name="Sullivan M.B."/>
            <person name="Ting C.S."/>
            <person name="Tolonen A."/>
            <person name="Webb E.A."/>
            <person name="Zinser E.R."/>
            <person name="Chisholm S.W."/>
        </authorList>
    </citation>
    <scope>NUCLEOTIDE SEQUENCE [LARGE SCALE GENOMIC DNA]</scope>
    <source>
        <strain>MIT 9313</strain>
    </source>
</reference>
<feature type="chain" id="PRO_0000248739" description="Proline--tRNA ligase">
    <location>
        <begin position="1"/>
        <end position="599"/>
    </location>
</feature>